<comment type="function">
    <text evidence="1">One of the primary rRNA binding proteins, it binds directly to 16S rRNA central domain where it helps coordinate assembly of the platform of the 30S subunit.</text>
</comment>
<comment type="subunit">
    <text evidence="1">Part of the 30S ribosomal subunit. Contacts proteins S5 and S12.</text>
</comment>
<comment type="similarity">
    <text evidence="1">Belongs to the universal ribosomal protein uS8 family.</text>
</comment>
<reference key="1">
    <citation type="submission" date="2009-01" db="EMBL/GenBank/DDBJ databases">
        <title>Complete sequence of Desulfovibrio desulfuricans subsp. desulfuricans str. ATCC 27774.</title>
        <authorList>
            <consortium name="US DOE Joint Genome Institute"/>
            <person name="Lucas S."/>
            <person name="Copeland A."/>
            <person name="Lapidus A."/>
            <person name="Glavina del Rio T."/>
            <person name="Tice H."/>
            <person name="Bruce D."/>
            <person name="Goodwin L."/>
            <person name="Pitluck S."/>
            <person name="Sims D."/>
            <person name="Lu M."/>
            <person name="Kiss H."/>
            <person name="Meineke L."/>
            <person name="Brettin T."/>
            <person name="Detter J.C."/>
            <person name="Han C."/>
            <person name="Larimer F."/>
            <person name="Land M."/>
            <person name="Hauser L."/>
            <person name="Kyrpides N."/>
            <person name="Ovchinnikova G."/>
            <person name="Hazen T.C."/>
        </authorList>
    </citation>
    <scope>NUCLEOTIDE SEQUENCE [LARGE SCALE GENOMIC DNA]</scope>
    <source>
        <strain>ATCC 27774 / DSM 6949 / MB</strain>
    </source>
</reference>
<keyword id="KW-0687">Ribonucleoprotein</keyword>
<keyword id="KW-0689">Ribosomal protein</keyword>
<keyword id="KW-0694">RNA-binding</keyword>
<keyword id="KW-0699">rRNA-binding</keyword>
<name>RS8_DESDA</name>
<evidence type="ECO:0000255" key="1">
    <source>
        <dbReference type="HAMAP-Rule" id="MF_01302"/>
    </source>
</evidence>
<evidence type="ECO:0000305" key="2"/>
<gene>
    <name evidence="1" type="primary">rpsH</name>
    <name type="ordered locus">Ddes_0674</name>
</gene>
<dbReference type="EMBL" id="CP001358">
    <property type="protein sequence ID" value="ACL48582.1"/>
    <property type="molecule type" value="Genomic_DNA"/>
</dbReference>
<dbReference type="SMR" id="B8IYK5"/>
<dbReference type="STRING" id="525146.Ddes_0674"/>
<dbReference type="KEGG" id="dds:Ddes_0674"/>
<dbReference type="eggNOG" id="COG0096">
    <property type="taxonomic scope" value="Bacteria"/>
</dbReference>
<dbReference type="HOGENOM" id="CLU_098428_0_0_7"/>
<dbReference type="GO" id="GO:1990904">
    <property type="term" value="C:ribonucleoprotein complex"/>
    <property type="evidence" value="ECO:0007669"/>
    <property type="project" value="UniProtKB-KW"/>
</dbReference>
<dbReference type="GO" id="GO:0005840">
    <property type="term" value="C:ribosome"/>
    <property type="evidence" value="ECO:0007669"/>
    <property type="project" value="UniProtKB-KW"/>
</dbReference>
<dbReference type="GO" id="GO:0019843">
    <property type="term" value="F:rRNA binding"/>
    <property type="evidence" value="ECO:0007669"/>
    <property type="project" value="UniProtKB-UniRule"/>
</dbReference>
<dbReference type="GO" id="GO:0003735">
    <property type="term" value="F:structural constituent of ribosome"/>
    <property type="evidence" value="ECO:0007669"/>
    <property type="project" value="InterPro"/>
</dbReference>
<dbReference type="GO" id="GO:0006412">
    <property type="term" value="P:translation"/>
    <property type="evidence" value="ECO:0007669"/>
    <property type="project" value="UniProtKB-UniRule"/>
</dbReference>
<dbReference type="FunFam" id="3.30.1370.30:FF:000002">
    <property type="entry name" value="30S ribosomal protein S8"/>
    <property type="match status" value="1"/>
</dbReference>
<dbReference type="FunFam" id="3.30.1490.10:FF:000001">
    <property type="entry name" value="30S ribosomal protein S8"/>
    <property type="match status" value="1"/>
</dbReference>
<dbReference type="Gene3D" id="3.30.1370.30">
    <property type="match status" value="1"/>
</dbReference>
<dbReference type="Gene3D" id="3.30.1490.10">
    <property type="match status" value="1"/>
</dbReference>
<dbReference type="HAMAP" id="MF_01302_B">
    <property type="entry name" value="Ribosomal_uS8_B"/>
    <property type="match status" value="1"/>
</dbReference>
<dbReference type="InterPro" id="IPR000630">
    <property type="entry name" value="Ribosomal_uS8"/>
</dbReference>
<dbReference type="InterPro" id="IPR047863">
    <property type="entry name" value="Ribosomal_uS8_CS"/>
</dbReference>
<dbReference type="InterPro" id="IPR035987">
    <property type="entry name" value="Ribosomal_uS8_sf"/>
</dbReference>
<dbReference type="NCBIfam" id="NF001109">
    <property type="entry name" value="PRK00136.1"/>
    <property type="match status" value="1"/>
</dbReference>
<dbReference type="PANTHER" id="PTHR11758">
    <property type="entry name" value="40S RIBOSOMAL PROTEIN S15A"/>
    <property type="match status" value="1"/>
</dbReference>
<dbReference type="Pfam" id="PF00410">
    <property type="entry name" value="Ribosomal_S8"/>
    <property type="match status" value="1"/>
</dbReference>
<dbReference type="SUPFAM" id="SSF56047">
    <property type="entry name" value="Ribosomal protein S8"/>
    <property type="match status" value="1"/>
</dbReference>
<dbReference type="PROSITE" id="PS00053">
    <property type="entry name" value="RIBOSOMAL_S8"/>
    <property type="match status" value="1"/>
</dbReference>
<protein>
    <recommendedName>
        <fullName evidence="1">Small ribosomal subunit protein uS8</fullName>
    </recommendedName>
    <alternativeName>
        <fullName evidence="2">30S ribosomal protein S8</fullName>
    </alternativeName>
</protein>
<feature type="chain" id="PRO_1000165326" description="Small ribosomal subunit protein uS8">
    <location>
        <begin position="1"/>
        <end position="126"/>
    </location>
</feature>
<proteinExistence type="inferred from homology"/>
<organism>
    <name type="scientific">Desulfovibrio desulfuricans (strain ATCC 27774 / DSM 6949 / MB)</name>
    <dbReference type="NCBI Taxonomy" id="525146"/>
    <lineage>
        <taxon>Bacteria</taxon>
        <taxon>Pseudomonadati</taxon>
        <taxon>Thermodesulfobacteriota</taxon>
        <taxon>Desulfovibrionia</taxon>
        <taxon>Desulfovibrionales</taxon>
        <taxon>Desulfovibrionaceae</taxon>
        <taxon>Desulfovibrio</taxon>
    </lineage>
</organism>
<accession>B8IYK5</accession>
<sequence length="126" mass="13773">MLTDPIADMLTRIRNAHLALHKEVNVPRSRMKESLAAILKQEGYVEDVAVADSNITITLKYLKGKPVISGLKRISTPGRRVYVGAHKIPRVQNGLGICILSTSSGVLDGMTAHEKKVGGELLCEIW</sequence>